<comment type="subunit">
    <text evidence="1">Part of the 30S ribosomal subunit.</text>
</comment>
<comment type="subcellular location">
    <subcellularLocation>
        <location>Plastid</location>
        <location>Chloroplast</location>
    </subcellularLocation>
</comment>
<comment type="similarity">
    <text evidence="1">Belongs to the bacterial ribosomal protein bS18 family.</text>
</comment>
<sequence>MDKSKRPFLKSKRSFRRRLPPIQSGDRIDYRNMSLISRFISEQGKILSRRVNRLTLKQQRLITLAIKQARILSLLPFKRKGFQISESTARTNALKARTQNKDQKKEKFQINKKKK</sequence>
<proteinExistence type="inferred from homology"/>
<reference key="1">
    <citation type="journal article" date="2007" name="BMC Plant Biol.">
        <title>Complete plastid genome sequences suggest strong selection for retention of photosynthetic genes in the parasitic plant genus Cuscuta.</title>
        <authorList>
            <person name="McNeal J.R."/>
            <person name="Kuehl J.V."/>
            <person name="Boore J.L."/>
            <person name="dePamphilis C.W."/>
        </authorList>
    </citation>
    <scope>NUCLEOTIDE SEQUENCE [LARGE SCALE GENOMIC DNA]</scope>
</reference>
<accession>A7Y3G8</accession>
<organism>
    <name type="scientific">Ipomoea purpurea</name>
    <name type="common">Common morning glory</name>
    <name type="synonym">Pharbitis purpurea</name>
    <dbReference type="NCBI Taxonomy" id="4121"/>
    <lineage>
        <taxon>Eukaryota</taxon>
        <taxon>Viridiplantae</taxon>
        <taxon>Streptophyta</taxon>
        <taxon>Embryophyta</taxon>
        <taxon>Tracheophyta</taxon>
        <taxon>Spermatophyta</taxon>
        <taxon>Magnoliopsida</taxon>
        <taxon>eudicotyledons</taxon>
        <taxon>Gunneridae</taxon>
        <taxon>Pentapetalae</taxon>
        <taxon>asterids</taxon>
        <taxon>lamiids</taxon>
        <taxon>Solanales</taxon>
        <taxon>Convolvulaceae</taxon>
        <taxon>Ipomoeeae</taxon>
        <taxon>Ipomoea</taxon>
    </lineage>
</organism>
<geneLocation type="chloroplast"/>
<gene>
    <name evidence="1" type="primary">rps18</name>
</gene>
<dbReference type="EMBL" id="EU118126">
    <property type="protein sequence ID" value="ABV02370.1"/>
    <property type="molecule type" value="Genomic_DNA"/>
</dbReference>
<dbReference type="RefSeq" id="YP_001468330.1">
    <property type="nucleotide sequence ID" value="NC_009808.1"/>
</dbReference>
<dbReference type="SMR" id="A7Y3G8"/>
<dbReference type="GeneID" id="5601321"/>
<dbReference type="GO" id="GO:0009507">
    <property type="term" value="C:chloroplast"/>
    <property type="evidence" value="ECO:0007669"/>
    <property type="project" value="UniProtKB-SubCell"/>
</dbReference>
<dbReference type="GO" id="GO:0005763">
    <property type="term" value="C:mitochondrial small ribosomal subunit"/>
    <property type="evidence" value="ECO:0007669"/>
    <property type="project" value="TreeGrafter"/>
</dbReference>
<dbReference type="GO" id="GO:0070181">
    <property type="term" value="F:small ribosomal subunit rRNA binding"/>
    <property type="evidence" value="ECO:0007669"/>
    <property type="project" value="TreeGrafter"/>
</dbReference>
<dbReference type="GO" id="GO:0003735">
    <property type="term" value="F:structural constituent of ribosome"/>
    <property type="evidence" value="ECO:0007669"/>
    <property type="project" value="InterPro"/>
</dbReference>
<dbReference type="GO" id="GO:0006412">
    <property type="term" value="P:translation"/>
    <property type="evidence" value="ECO:0007669"/>
    <property type="project" value="UniProtKB-UniRule"/>
</dbReference>
<dbReference type="FunFam" id="4.10.640.10:FF:000002">
    <property type="entry name" value="30S ribosomal protein S18, chloroplastic"/>
    <property type="match status" value="1"/>
</dbReference>
<dbReference type="Gene3D" id="4.10.640.10">
    <property type="entry name" value="Ribosomal protein S18"/>
    <property type="match status" value="1"/>
</dbReference>
<dbReference type="HAMAP" id="MF_00270">
    <property type="entry name" value="Ribosomal_bS18"/>
    <property type="match status" value="1"/>
</dbReference>
<dbReference type="InterPro" id="IPR001648">
    <property type="entry name" value="Ribosomal_bS18"/>
</dbReference>
<dbReference type="InterPro" id="IPR018275">
    <property type="entry name" value="Ribosomal_bS18_CS"/>
</dbReference>
<dbReference type="InterPro" id="IPR036870">
    <property type="entry name" value="Ribosomal_bS18_sf"/>
</dbReference>
<dbReference type="NCBIfam" id="TIGR00165">
    <property type="entry name" value="S18"/>
    <property type="match status" value="1"/>
</dbReference>
<dbReference type="PANTHER" id="PTHR13479">
    <property type="entry name" value="30S RIBOSOMAL PROTEIN S18"/>
    <property type="match status" value="1"/>
</dbReference>
<dbReference type="PANTHER" id="PTHR13479:SF40">
    <property type="entry name" value="SMALL RIBOSOMAL SUBUNIT PROTEIN BS18M"/>
    <property type="match status" value="1"/>
</dbReference>
<dbReference type="Pfam" id="PF01084">
    <property type="entry name" value="Ribosomal_S18"/>
    <property type="match status" value="1"/>
</dbReference>
<dbReference type="PRINTS" id="PR00974">
    <property type="entry name" value="RIBOSOMALS18"/>
</dbReference>
<dbReference type="SUPFAM" id="SSF46911">
    <property type="entry name" value="Ribosomal protein S18"/>
    <property type="match status" value="1"/>
</dbReference>
<dbReference type="PROSITE" id="PS00057">
    <property type="entry name" value="RIBOSOMAL_S18"/>
    <property type="match status" value="1"/>
</dbReference>
<protein>
    <recommendedName>
        <fullName evidence="1">Small ribosomal subunit protein bS18c</fullName>
    </recommendedName>
    <alternativeName>
        <fullName evidence="3">30S ribosomal protein S18, chloroplastic</fullName>
    </alternativeName>
</protein>
<feature type="chain" id="PRO_0000345589" description="Small ribosomal subunit protein bS18c">
    <location>
        <begin position="1"/>
        <end position="115"/>
    </location>
</feature>
<feature type="region of interest" description="Disordered" evidence="2">
    <location>
        <begin position="91"/>
        <end position="115"/>
    </location>
</feature>
<feature type="compositionally biased region" description="Basic and acidic residues" evidence="2">
    <location>
        <begin position="99"/>
        <end position="109"/>
    </location>
</feature>
<keyword id="KW-0150">Chloroplast</keyword>
<keyword id="KW-0934">Plastid</keyword>
<keyword id="KW-0687">Ribonucleoprotein</keyword>
<keyword id="KW-0689">Ribosomal protein</keyword>
<keyword id="KW-0694">RNA-binding</keyword>
<keyword id="KW-0699">rRNA-binding</keyword>
<name>RR18_IPOPU</name>
<evidence type="ECO:0000255" key="1">
    <source>
        <dbReference type="HAMAP-Rule" id="MF_00270"/>
    </source>
</evidence>
<evidence type="ECO:0000256" key="2">
    <source>
        <dbReference type="SAM" id="MobiDB-lite"/>
    </source>
</evidence>
<evidence type="ECO:0000305" key="3"/>